<keyword id="KW-0963">Cytoplasm</keyword>
<evidence type="ECO:0000255" key="1">
    <source>
        <dbReference type="HAMAP-Rule" id="MF_00795"/>
    </source>
</evidence>
<name>CUTC_ECOBW</name>
<gene>
    <name evidence="1" type="primary">cutC</name>
    <name type="ordered locus">BWG_1688</name>
</gene>
<reference key="1">
    <citation type="journal article" date="2009" name="J. Bacteriol.">
        <title>Genomic sequencing reveals regulatory mutations and recombinational events in the widely used MC4100 lineage of Escherichia coli K-12.</title>
        <authorList>
            <person name="Ferenci T."/>
            <person name="Zhou Z."/>
            <person name="Betteridge T."/>
            <person name="Ren Y."/>
            <person name="Liu Y."/>
            <person name="Feng L."/>
            <person name="Reeves P.R."/>
            <person name="Wang L."/>
        </authorList>
    </citation>
    <scope>NUCLEOTIDE SEQUENCE [LARGE SCALE GENOMIC DNA]</scope>
    <source>
        <strain>K12 / MC4100 / BW2952</strain>
    </source>
</reference>
<sequence>MALLEICCYSMECALTAQQNGADRVELCAAPKEGGLTPSLGVLKSVRQRVTIPVHPIIRPRGGDFCYSDGEFAAILEDVRTVRELGFPGLVTGVLDVDGNVDMPRMEKIMAAAGPLAVTFHRAFDMCANPLYTLNNLAELGIARVLTSGQKSDALQGLSKIMELIAHRDAPIIMAGAGVRAENLHHFLDAGVLEVHSSAGAWQASPMRYRNQGLSMSSDEHADEYSRYIVDGAAVAEMKGIIERHQAK</sequence>
<accession>C4ZQF8</accession>
<dbReference type="EMBL" id="CP001396">
    <property type="protein sequence ID" value="ACR62605.1"/>
    <property type="molecule type" value="Genomic_DNA"/>
</dbReference>
<dbReference type="RefSeq" id="WP_001185741.1">
    <property type="nucleotide sequence ID" value="NC_012759.1"/>
</dbReference>
<dbReference type="SMR" id="C4ZQF8"/>
<dbReference type="GeneID" id="93776175"/>
<dbReference type="KEGG" id="ebw:BWG_1688"/>
<dbReference type="HOGENOM" id="CLU_050555_3_1_6"/>
<dbReference type="GO" id="GO:0005737">
    <property type="term" value="C:cytoplasm"/>
    <property type="evidence" value="ECO:0007669"/>
    <property type="project" value="UniProtKB-SubCell"/>
</dbReference>
<dbReference type="GO" id="GO:0005507">
    <property type="term" value="F:copper ion binding"/>
    <property type="evidence" value="ECO:0007669"/>
    <property type="project" value="TreeGrafter"/>
</dbReference>
<dbReference type="FunFam" id="3.20.20.380:FF:000001">
    <property type="entry name" value="Copper homeostasis protein CutC"/>
    <property type="match status" value="1"/>
</dbReference>
<dbReference type="Gene3D" id="3.20.20.380">
    <property type="entry name" value="Copper homeostasis (CutC) domain"/>
    <property type="match status" value="1"/>
</dbReference>
<dbReference type="HAMAP" id="MF_00795">
    <property type="entry name" value="CutC"/>
    <property type="match status" value="1"/>
</dbReference>
<dbReference type="InterPro" id="IPR005627">
    <property type="entry name" value="CutC-like"/>
</dbReference>
<dbReference type="InterPro" id="IPR036822">
    <property type="entry name" value="CutC-like_dom_sf"/>
</dbReference>
<dbReference type="NCBIfam" id="NF008603">
    <property type="entry name" value="PRK11572.1"/>
    <property type="match status" value="1"/>
</dbReference>
<dbReference type="PANTHER" id="PTHR12598">
    <property type="entry name" value="COPPER HOMEOSTASIS PROTEIN CUTC"/>
    <property type="match status" value="1"/>
</dbReference>
<dbReference type="PANTHER" id="PTHR12598:SF0">
    <property type="entry name" value="COPPER HOMEOSTASIS PROTEIN CUTC HOMOLOG"/>
    <property type="match status" value="1"/>
</dbReference>
<dbReference type="Pfam" id="PF03932">
    <property type="entry name" value="CutC"/>
    <property type="match status" value="1"/>
</dbReference>
<dbReference type="SUPFAM" id="SSF110395">
    <property type="entry name" value="CutC-like"/>
    <property type="match status" value="1"/>
</dbReference>
<organism>
    <name type="scientific">Escherichia coli (strain K12 / MC4100 / BW2952)</name>
    <dbReference type="NCBI Taxonomy" id="595496"/>
    <lineage>
        <taxon>Bacteria</taxon>
        <taxon>Pseudomonadati</taxon>
        <taxon>Pseudomonadota</taxon>
        <taxon>Gammaproteobacteria</taxon>
        <taxon>Enterobacterales</taxon>
        <taxon>Enterobacteriaceae</taxon>
        <taxon>Escherichia</taxon>
    </lineage>
</organism>
<feature type="chain" id="PRO_1000212963" description="PF03932 family protein CutC">
    <location>
        <begin position="1"/>
        <end position="248"/>
    </location>
</feature>
<protein>
    <recommendedName>
        <fullName evidence="1">PF03932 family protein CutC</fullName>
    </recommendedName>
</protein>
<proteinExistence type="inferred from homology"/>
<comment type="subunit">
    <text evidence="1">Homodimer.</text>
</comment>
<comment type="subcellular location">
    <subcellularLocation>
        <location evidence="1">Cytoplasm</location>
    </subcellularLocation>
</comment>
<comment type="similarity">
    <text evidence="1">Belongs to the CutC family.</text>
</comment>
<comment type="caution">
    <text evidence="1">Once thought to be involved in copper homeostasis, experiments in E.coli have shown this is not the case.</text>
</comment>